<sequence length="142" mass="15185">MVLSAADKSNIQAAWGKVGGHAADYGAEALERMFLSFPTTKTYFPHFDLSHGSAQVKGHGAKVANALTKAVGHLDDLPGALSELSDLHAHKLRVDPVNFKLLSHSLLVTLASHLPNDFTPAVHASLDKFLASVSTVLTSKYR</sequence>
<proteinExistence type="evidence at protein level"/>
<keyword id="KW-0002">3D-structure</keyword>
<keyword id="KW-0349">Heme</keyword>
<keyword id="KW-0408">Iron</keyword>
<keyword id="KW-0479">Metal-binding</keyword>
<keyword id="KW-0561">Oxygen transport</keyword>
<keyword id="KW-0813">Transport</keyword>
<dbReference type="EMBL" id="AJ242732">
    <property type="protein sequence ID" value="CAB43763.1"/>
    <property type="molecule type" value="Genomic_DNA"/>
</dbReference>
<dbReference type="RefSeq" id="XP_006050022.1">
    <property type="nucleotide sequence ID" value="XM_006049960.1"/>
</dbReference>
<dbReference type="PDB" id="3CY5">
    <property type="method" value="X-ray"/>
    <property type="resolution" value="2.00 A"/>
    <property type="chains" value="A/C=2-142"/>
</dbReference>
<dbReference type="PDBsum" id="3CY5"/>
<dbReference type="SMR" id="Q9TSN8"/>
<dbReference type="GeneID" id="102398760"/>
<dbReference type="KEGG" id="bbub:102398760"/>
<dbReference type="OrthoDB" id="8751793at2759"/>
<dbReference type="EvolutionaryTrace" id="Q9TSN8"/>
<dbReference type="GO" id="GO:0072562">
    <property type="term" value="C:blood microparticle"/>
    <property type="evidence" value="ECO:0007669"/>
    <property type="project" value="TreeGrafter"/>
</dbReference>
<dbReference type="GO" id="GO:0031838">
    <property type="term" value="C:haptoglobin-hemoglobin complex"/>
    <property type="evidence" value="ECO:0007669"/>
    <property type="project" value="TreeGrafter"/>
</dbReference>
<dbReference type="GO" id="GO:0005833">
    <property type="term" value="C:hemoglobin complex"/>
    <property type="evidence" value="ECO:0007669"/>
    <property type="project" value="InterPro"/>
</dbReference>
<dbReference type="GO" id="GO:0031720">
    <property type="term" value="F:haptoglobin binding"/>
    <property type="evidence" value="ECO:0007669"/>
    <property type="project" value="TreeGrafter"/>
</dbReference>
<dbReference type="GO" id="GO:0020037">
    <property type="term" value="F:heme binding"/>
    <property type="evidence" value="ECO:0007669"/>
    <property type="project" value="InterPro"/>
</dbReference>
<dbReference type="GO" id="GO:0005506">
    <property type="term" value="F:iron ion binding"/>
    <property type="evidence" value="ECO:0007669"/>
    <property type="project" value="InterPro"/>
</dbReference>
<dbReference type="GO" id="GO:0043177">
    <property type="term" value="F:organic acid binding"/>
    <property type="evidence" value="ECO:0007669"/>
    <property type="project" value="TreeGrafter"/>
</dbReference>
<dbReference type="GO" id="GO:0019825">
    <property type="term" value="F:oxygen binding"/>
    <property type="evidence" value="ECO:0007669"/>
    <property type="project" value="InterPro"/>
</dbReference>
<dbReference type="GO" id="GO:0005344">
    <property type="term" value="F:oxygen carrier activity"/>
    <property type="evidence" value="ECO:0007669"/>
    <property type="project" value="UniProtKB-KW"/>
</dbReference>
<dbReference type="GO" id="GO:0004601">
    <property type="term" value="F:peroxidase activity"/>
    <property type="evidence" value="ECO:0007669"/>
    <property type="project" value="TreeGrafter"/>
</dbReference>
<dbReference type="GO" id="GO:0042744">
    <property type="term" value="P:hydrogen peroxide catabolic process"/>
    <property type="evidence" value="ECO:0007669"/>
    <property type="project" value="TreeGrafter"/>
</dbReference>
<dbReference type="CDD" id="cd08927">
    <property type="entry name" value="Hb-alpha-like"/>
    <property type="match status" value="1"/>
</dbReference>
<dbReference type="FunFam" id="1.10.490.10:FF:000002">
    <property type="entry name" value="Hemoglobin subunit alpha"/>
    <property type="match status" value="1"/>
</dbReference>
<dbReference type="Gene3D" id="1.10.490.10">
    <property type="entry name" value="Globins"/>
    <property type="match status" value="1"/>
</dbReference>
<dbReference type="InterPro" id="IPR000971">
    <property type="entry name" value="Globin"/>
</dbReference>
<dbReference type="InterPro" id="IPR009050">
    <property type="entry name" value="Globin-like_sf"/>
</dbReference>
<dbReference type="InterPro" id="IPR012292">
    <property type="entry name" value="Globin/Proto"/>
</dbReference>
<dbReference type="InterPro" id="IPR002338">
    <property type="entry name" value="Hemoglobin_a-typ"/>
</dbReference>
<dbReference type="InterPro" id="IPR050056">
    <property type="entry name" value="Hemoglobin_oxygen_transport"/>
</dbReference>
<dbReference type="InterPro" id="IPR002339">
    <property type="entry name" value="Hemoglobin_pi"/>
</dbReference>
<dbReference type="PANTHER" id="PTHR11442">
    <property type="entry name" value="HEMOGLOBIN FAMILY MEMBER"/>
    <property type="match status" value="1"/>
</dbReference>
<dbReference type="PANTHER" id="PTHR11442:SF48">
    <property type="entry name" value="HEMOGLOBIN SUBUNIT ALPHA"/>
    <property type="match status" value="1"/>
</dbReference>
<dbReference type="Pfam" id="PF00042">
    <property type="entry name" value="Globin"/>
    <property type="match status" value="1"/>
</dbReference>
<dbReference type="PRINTS" id="PR00612">
    <property type="entry name" value="ALPHAHAEM"/>
</dbReference>
<dbReference type="PRINTS" id="PR00815">
    <property type="entry name" value="PIHAEM"/>
</dbReference>
<dbReference type="SUPFAM" id="SSF46458">
    <property type="entry name" value="Globin-like"/>
    <property type="match status" value="1"/>
</dbReference>
<dbReference type="PROSITE" id="PS01033">
    <property type="entry name" value="GLOBIN"/>
    <property type="match status" value="1"/>
</dbReference>
<name>HBA2_BUBBU</name>
<accession>Q9TSN8</accession>
<reference key="1">
    <citation type="journal article" date="2001" name="J. Protein Chem.">
        <title>Primary structure of alpha-globin chains from river buffalo (Bubalus bubalis L.) hemoglobins.</title>
        <authorList>
            <person name="Ferranti P."/>
            <person name="Facchiano A."/>
            <person name="Zappacosta F."/>
            <person name="Vincenti D."/>
            <person name="Rullo R."/>
            <person name="Masala B."/>
            <person name="Di Luccia A."/>
        </authorList>
    </citation>
    <scope>NUCLEOTIDE SEQUENCE [GENOMIC DNA]</scope>
    <source>
        <strain>Italy</strain>
    </source>
</reference>
<protein>
    <recommendedName>
        <fullName>Hemoglobin subunit alpha-2</fullName>
    </recommendedName>
    <alternativeName>
        <fullName>Alpha-2-globin</fullName>
    </alternativeName>
    <alternativeName>
        <fullName>Hemoglobin alpha-2 chain</fullName>
    </alternativeName>
    <alternativeName>
        <fullName>Ialpha2</fullName>
    </alternativeName>
</protein>
<evidence type="ECO:0000255" key="1">
    <source>
        <dbReference type="PROSITE-ProRule" id="PRU00238"/>
    </source>
</evidence>
<evidence type="ECO:0007829" key="2">
    <source>
        <dbReference type="PDB" id="3CY5"/>
    </source>
</evidence>
<organism>
    <name type="scientific">Bubalus bubalis</name>
    <name type="common">Domestic water buffalo</name>
    <dbReference type="NCBI Taxonomy" id="89462"/>
    <lineage>
        <taxon>Eukaryota</taxon>
        <taxon>Metazoa</taxon>
        <taxon>Chordata</taxon>
        <taxon>Craniata</taxon>
        <taxon>Vertebrata</taxon>
        <taxon>Euteleostomi</taxon>
        <taxon>Mammalia</taxon>
        <taxon>Eutheria</taxon>
        <taxon>Laurasiatheria</taxon>
        <taxon>Artiodactyla</taxon>
        <taxon>Ruminantia</taxon>
        <taxon>Pecora</taxon>
        <taxon>Bovidae</taxon>
        <taxon>Bovinae</taxon>
        <taxon>Bubalus</taxon>
    </lineage>
</organism>
<comment type="function">
    <text>Involved in oxygen transport from the lung to the various peripheral tissues.</text>
</comment>
<comment type="subunit">
    <text>Heterotetramer of two alpha chains and two beta chains.</text>
</comment>
<comment type="tissue specificity">
    <text>Red blood cells.</text>
</comment>
<comment type="similarity">
    <text evidence="1">Belongs to the globin family.</text>
</comment>
<feature type="chain" id="PRO_0000052572" description="Hemoglobin subunit alpha-2">
    <location>
        <begin position="1"/>
        <end position="142"/>
    </location>
</feature>
<feature type="domain" description="Globin" evidence="1">
    <location>
        <begin position="2"/>
        <end position="142"/>
    </location>
</feature>
<feature type="binding site" evidence="1">
    <location>
        <position position="59"/>
    </location>
    <ligand>
        <name>O2</name>
        <dbReference type="ChEBI" id="CHEBI:15379"/>
    </ligand>
</feature>
<feature type="binding site" description="proximal binding residue" evidence="1">
    <location>
        <position position="88"/>
    </location>
    <ligand>
        <name>heme b</name>
        <dbReference type="ChEBI" id="CHEBI:60344"/>
    </ligand>
    <ligandPart>
        <name>Fe</name>
        <dbReference type="ChEBI" id="CHEBI:18248"/>
    </ligandPart>
</feature>
<feature type="helix" evidence="2">
    <location>
        <begin position="5"/>
        <end position="18"/>
    </location>
</feature>
<feature type="helix" evidence="2">
    <location>
        <begin position="19"/>
        <end position="21"/>
    </location>
</feature>
<feature type="helix" evidence="2">
    <location>
        <begin position="22"/>
        <end position="36"/>
    </location>
</feature>
<feature type="helix" evidence="2">
    <location>
        <begin position="38"/>
        <end position="43"/>
    </location>
</feature>
<feature type="helix" evidence="2">
    <location>
        <begin position="54"/>
        <end position="71"/>
    </location>
</feature>
<feature type="helix" evidence="2">
    <location>
        <begin position="77"/>
        <end position="80"/>
    </location>
</feature>
<feature type="helix" evidence="2">
    <location>
        <begin position="82"/>
        <end position="89"/>
    </location>
</feature>
<feature type="helix" evidence="2">
    <location>
        <begin position="96"/>
        <end position="113"/>
    </location>
</feature>
<feature type="turn" evidence="2">
    <location>
        <begin position="115"/>
        <end position="117"/>
    </location>
</feature>
<feature type="helix" evidence="2">
    <location>
        <begin position="120"/>
        <end position="137"/>
    </location>
</feature>